<protein>
    <recommendedName>
        <fullName>Protein escargot</fullName>
    </recommendedName>
    <alternativeName>
        <fullName>Protein fleabag</fullName>
    </alternativeName>
</protein>
<comment type="function">
    <text evidence="3 4 6 7 8 9">Transcription factor that can both stimulate and repress transcription. Binds to the consensus DNA sequence 5'-A/GCAGGTG-3'. Regulates cell motility and adhesion during tracheal morphogenesis by stimulating transcription of the DE-cadherin gene shg at branch tips, thereby promoting tracheal tube fusion. Maintains diploidy in imaginal cells by inhibiting the transcription of genes required for endoreplication. Required for development of the genital disk and acts as an intrinsic determinant of wing cell fate. The somatic protein is required for maintenance of male germ cells. Acts with other members of the snail protein family to control embryonic central nervous system development.</text>
</comment>
<comment type="subcellular location">
    <subcellularLocation>
        <location>Nucleus</location>
    </subcellularLocation>
</comment>
<comment type="tissue specificity">
    <text evidence="4 5 7 8">Expression is complex and dynamic. In early embryogenesis, expression begins on the dorsal side of the embryo. Expressed in a pattern of longitudinal stripes early in germband elongation. Later in embryogenesis, expression is in cells that correspond to the wing, haltere, leg and genital imaginal disks and the abdominal histoblasts. In the embryonic leg disk, expression is restricted to imaginal cells. Also expressed in the central nervous system (CNS), tracheae and head of stage 14 embryos. CNS and tracheal expression decays during later stages, though head expression persists until late in embryogenesis. In third instar larvae, expression is seen in the brain and in regions of many imaginal tissues including the eye-antennal, wing, leg and haltere disks. Expressed in embryonic, larval and adult male germline stem cells and in the somatic cells of the embryonic gonads.</text>
</comment>
<comment type="similarity">
    <text evidence="10">Belongs to the snail C2H2-type zinc-finger protein family.</text>
</comment>
<gene>
    <name type="primary">esg</name>
    <name type="synonym">flg</name>
    <name type="ORF">CG3758</name>
</gene>
<name>ESCA_DROME</name>
<sequence length="470" mass="51963">MHTVEDMLVEKNYSKCPLKKRPVNYQFEAPQNHSNTPNEPQDLCVKKMEILEENPSEELINVSDCCEDEGVDVDHTDDEHIEEEDEDVDVDVDSDPNQTQAAALAAAAAVAAAAAASVVVPTPTYPKYPWNNFHMSPYTAEFYRTINQQGHQILPLRGDLIAPSSPSDSLGSLSPPPHHYLHGRASSVSPPMRSEIIHRPIGVRQHRFLPYPQMPGYPSLGGYTHTHHHHAPISPAYSENSYYSMRSMTPESSCSSSLPEDLSLKHKNLNLNLNTSQPGEQAAAKTGDMSPETMPNASAKKDKNQPPRYQCPDCQKSYSTFSGLTKHQQFHCPAAEGNQVKKSFSCKDCDKTYVSLGALKMHIRTHTLPCKCNLCGKAFSRPWLLQGHIRTHTGEKPFSCQHCHRAFADRSNLRAHLQTHSDIKKYSCTSCSKTFSRMSLLTKHSEGGCPGGSAGSSSSSELNYAGYAEP</sequence>
<reference key="1">
    <citation type="journal article" date="1992" name="Mech. Dev.">
        <title>The Drosophila gene escargot encodes a zinc finger motif found in snail-related genes.</title>
        <authorList>
            <person name="Whiteley M.H."/>
            <person name="Noguchi P.D."/>
            <person name="Sensabaugh S.M."/>
            <person name="Odenwald W."/>
            <person name="Kassis J.A."/>
        </authorList>
    </citation>
    <scope>NUCLEOTIDE SEQUENCE [GENOMIC DNA]</scope>
    <scope>TISSUE SPECIFICITY</scope>
    <source>
        <strain>Oregon-R</strain>
    </source>
</reference>
<reference key="2">
    <citation type="journal article" date="1999" name="Genetics">
        <title>An exploration of the sequence of a 2.9-Mb region of the genome of Drosophila melanogaster: the Adh region.</title>
        <authorList>
            <person name="Ashburner M."/>
            <person name="Misra S."/>
            <person name="Roote J."/>
            <person name="Lewis S.E."/>
            <person name="Blazej R.G."/>
            <person name="Davis T."/>
            <person name="Doyle C."/>
            <person name="Galle R.F."/>
            <person name="George R.A."/>
            <person name="Harris N.L."/>
            <person name="Hartzell G."/>
            <person name="Harvey D.A."/>
            <person name="Hong L."/>
            <person name="Houston K.A."/>
            <person name="Hoskins R.A."/>
            <person name="Johnson G."/>
            <person name="Martin C."/>
            <person name="Moshrefi A.R."/>
            <person name="Palazzolo M."/>
            <person name="Reese M.G."/>
            <person name="Spradling A.C."/>
            <person name="Tsang G."/>
            <person name="Wan K.H."/>
            <person name="Whitelaw K."/>
            <person name="Celniker S.E."/>
            <person name="Rubin G.M."/>
        </authorList>
    </citation>
    <scope>NUCLEOTIDE SEQUENCE [LARGE SCALE GENOMIC DNA]</scope>
    <source>
        <strain>Berkeley</strain>
    </source>
</reference>
<reference key="3">
    <citation type="journal article" date="2000" name="Science">
        <title>The genome sequence of Drosophila melanogaster.</title>
        <authorList>
            <person name="Adams M.D."/>
            <person name="Celniker S.E."/>
            <person name="Holt R.A."/>
            <person name="Evans C.A."/>
            <person name="Gocayne J.D."/>
            <person name="Amanatides P.G."/>
            <person name="Scherer S.E."/>
            <person name="Li P.W."/>
            <person name="Hoskins R.A."/>
            <person name="Galle R.F."/>
            <person name="George R.A."/>
            <person name="Lewis S.E."/>
            <person name="Richards S."/>
            <person name="Ashburner M."/>
            <person name="Henderson S.N."/>
            <person name="Sutton G.G."/>
            <person name="Wortman J.R."/>
            <person name="Yandell M.D."/>
            <person name="Zhang Q."/>
            <person name="Chen L.X."/>
            <person name="Brandon R.C."/>
            <person name="Rogers Y.-H.C."/>
            <person name="Blazej R.G."/>
            <person name="Champe M."/>
            <person name="Pfeiffer B.D."/>
            <person name="Wan K.H."/>
            <person name="Doyle C."/>
            <person name="Baxter E.G."/>
            <person name="Helt G."/>
            <person name="Nelson C.R."/>
            <person name="Miklos G.L.G."/>
            <person name="Abril J.F."/>
            <person name="Agbayani A."/>
            <person name="An H.-J."/>
            <person name="Andrews-Pfannkoch C."/>
            <person name="Baldwin D."/>
            <person name="Ballew R.M."/>
            <person name="Basu A."/>
            <person name="Baxendale J."/>
            <person name="Bayraktaroglu L."/>
            <person name="Beasley E.M."/>
            <person name="Beeson K.Y."/>
            <person name="Benos P.V."/>
            <person name="Berman B.P."/>
            <person name="Bhandari D."/>
            <person name="Bolshakov S."/>
            <person name="Borkova D."/>
            <person name="Botchan M.R."/>
            <person name="Bouck J."/>
            <person name="Brokstein P."/>
            <person name="Brottier P."/>
            <person name="Burtis K.C."/>
            <person name="Busam D.A."/>
            <person name="Butler H."/>
            <person name="Cadieu E."/>
            <person name="Center A."/>
            <person name="Chandra I."/>
            <person name="Cherry J.M."/>
            <person name="Cawley S."/>
            <person name="Dahlke C."/>
            <person name="Davenport L.B."/>
            <person name="Davies P."/>
            <person name="de Pablos B."/>
            <person name="Delcher A."/>
            <person name="Deng Z."/>
            <person name="Mays A.D."/>
            <person name="Dew I."/>
            <person name="Dietz S.M."/>
            <person name="Dodson K."/>
            <person name="Doup L.E."/>
            <person name="Downes M."/>
            <person name="Dugan-Rocha S."/>
            <person name="Dunkov B.C."/>
            <person name="Dunn P."/>
            <person name="Durbin K.J."/>
            <person name="Evangelista C.C."/>
            <person name="Ferraz C."/>
            <person name="Ferriera S."/>
            <person name="Fleischmann W."/>
            <person name="Fosler C."/>
            <person name="Gabrielian A.E."/>
            <person name="Garg N.S."/>
            <person name="Gelbart W.M."/>
            <person name="Glasser K."/>
            <person name="Glodek A."/>
            <person name="Gong F."/>
            <person name="Gorrell J.H."/>
            <person name="Gu Z."/>
            <person name="Guan P."/>
            <person name="Harris M."/>
            <person name="Harris N.L."/>
            <person name="Harvey D.A."/>
            <person name="Heiman T.J."/>
            <person name="Hernandez J.R."/>
            <person name="Houck J."/>
            <person name="Hostin D."/>
            <person name="Houston K.A."/>
            <person name="Howland T.J."/>
            <person name="Wei M.-H."/>
            <person name="Ibegwam C."/>
            <person name="Jalali M."/>
            <person name="Kalush F."/>
            <person name="Karpen G.H."/>
            <person name="Ke Z."/>
            <person name="Kennison J.A."/>
            <person name="Ketchum K.A."/>
            <person name="Kimmel B.E."/>
            <person name="Kodira C.D."/>
            <person name="Kraft C.L."/>
            <person name="Kravitz S."/>
            <person name="Kulp D."/>
            <person name="Lai Z."/>
            <person name="Lasko P."/>
            <person name="Lei Y."/>
            <person name="Levitsky A.A."/>
            <person name="Li J.H."/>
            <person name="Li Z."/>
            <person name="Liang Y."/>
            <person name="Lin X."/>
            <person name="Liu X."/>
            <person name="Mattei B."/>
            <person name="McIntosh T.C."/>
            <person name="McLeod M.P."/>
            <person name="McPherson D."/>
            <person name="Merkulov G."/>
            <person name="Milshina N.V."/>
            <person name="Mobarry C."/>
            <person name="Morris J."/>
            <person name="Moshrefi A."/>
            <person name="Mount S.M."/>
            <person name="Moy M."/>
            <person name="Murphy B."/>
            <person name="Murphy L."/>
            <person name="Muzny D.M."/>
            <person name="Nelson D.L."/>
            <person name="Nelson D.R."/>
            <person name="Nelson K.A."/>
            <person name="Nixon K."/>
            <person name="Nusskern D.R."/>
            <person name="Pacleb J.M."/>
            <person name="Palazzolo M."/>
            <person name="Pittman G.S."/>
            <person name="Pan S."/>
            <person name="Pollard J."/>
            <person name="Puri V."/>
            <person name="Reese M.G."/>
            <person name="Reinert K."/>
            <person name="Remington K."/>
            <person name="Saunders R.D.C."/>
            <person name="Scheeler F."/>
            <person name="Shen H."/>
            <person name="Shue B.C."/>
            <person name="Siden-Kiamos I."/>
            <person name="Simpson M."/>
            <person name="Skupski M.P."/>
            <person name="Smith T.J."/>
            <person name="Spier E."/>
            <person name="Spradling A.C."/>
            <person name="Stapleton M."/>
            <person name="Strong R."/>
            <person name="Sun E."/>
            <person name="Svirskas R."/>
            <person name="Tector C."/>
            <person name="Turner R."/>
            <person name="Venter E."/>
            <person name="Wang A.H."/>
            <person name="Wang X."/>
            <person name="Wang Z.-Y."/>
            <person name="Wassarman D.A."/>
            <person name="Weinstock G.M."/>
            <person name="Weissenbach J."/>
            <person name="Williams S.M."/>
            <person name="Woodage T."/>
            <person name="Worley K.C."/>
            <person name="Wu D."/>
            <person name="Yang S."/>
            <person name="Yao Q.A."/>
            <person name="Ye J."/>
            <person name="Yeh R.-F."/>
            <person name="Zaveri J.S."/>
            <person name="Zhan M."/>
            <person name="Zhang G."/>
            <person name="Zhao Q."/>
            <person name="Zheng L."/>
            <person name="Zheng X.H."/>
            <person name="Zhong F.N."/>
            <person name="Zhong W."/>
            <person name="Zhou X."/>
            <person name="Zhu S.C."/>
            <person name="Zhu X."/>
            <person name="Smith H.O."/>
            <person name="Gibbs R.A."/>
            <person name="Myers E.W."/>
            <person name="Rubin G.M."/>
            <person name="Venter J.C."/>
        </authorList>
    </citation>
    <scope>NUCLEOTIDE SEQUENCE [LARGE SCALE GENOMIC DNA]</scope>
    <source>
        <strain>Berkeley</strain>
    </source>
</reference>
<reference key="4">
    <citation type="journal article" date="2002" name="Genome Biol.">
        <title>Annotation of the Drosophila melanogaster euchromatic genome: a systematic review.</title>
        <authorList>
            <person name="Misra S."/>
            <person name="Crosby M.A."/>
            <person name="Mungall C.J."/>
            <person name="Matthews B.B."/>
            <person name="Campbell K.S."/>
            <person name="Hradecky P."/>
            <person name="Huang Y."/>
            <person name="Kaminker J.S."/>
            <person name="Millburn G.H."/>
            <person name="Prochnik S.E."/>
            <person name="Smith C.D."/>
            <person name="Tupy J.L."/>
            <person name="Whitfield E.J."/>
            <person name="Bayraktaroglu L."/>
            <person name="Berman B.P."/>
            <person name="Bettencourt B.R."/>
            <person name="Celniker S.E."/>
            <person name="de Grey A.D.N.J."/>
            <person name="Drysdale R.A."/>
            <person name="Harris N.L."/>
            <person name="Richter J."/>
            <person name="Russo S."/>
            <person name="Schroeder A.J."/>
            <person name="Shu S.Q."/>
            <person name="Stapleton M."/>
            <person name="Yamada C."/>
            <person name="Ashburner M."/>
            <person name="Gelbart W.M."/>
            <person name="Rubin G.M."/>
            <person name="Lewis S.E."/>
        </authorList>
    </citation>
    <scope>GENOME REANNOTATION</scope>
    <source>
        <strain>Berkeley</strain>
    </source>
</reference>
<reference key="5">
    <citation type="journal article" date="2002" name="Genome Biol.">
        <title>A Drosophila full-length cDNA resource.</title>
        <authorList>
            <person name="Stapleton M."/>
            <person name="Carlson J.W."/>
            <person name="Brokstein P."/>
            <person name="Yu C."/>
            <person name="Champe M."/>
            <person name="George R.A."/>
            <person name="Guarin H."/>
            <person name="Kronmiller B."/>
            <person name="Pacleb J.M."/>
            <person name="Park S."/>
            <person name="Wan K.H."/>
            <person name="Rubin G.M."/>
            <person name="Celniker S.E."/>
        </authorList>
    </citation>
    <scope>NUCLEOTIDE SEQUENCE [LARGE SCALE MRNA]</scope>
    <source>
        <strain>Berkeley</strain>
        <tissue>Embryo</tissue>
    </source>
</reference>
<reference key="6">
    <citation type="journal article" date="1993" name="Development">
        <title>Control of imaginal cell development by the escargot gene of Drosophila.</title>
        <authorList>
            <person name="Hayashi S."/>
            <person name="Hirose S."/>
            <person name="Metcalfe T."/>
            <person name="Shirras A.D."/>
        </authorList>
    </citation>
    <scope>FUNCTION</scope>
    <scope>TISSUE SPECIFICITY</scope>
</reference>
<reference key="7">
    <citation type="journal article" date="1994" name="Genes Dev.">
        <title>Diploidy of Drosophila imaginal cells is maintained by a transcriptional repressor encoded by escargot.</title>
        <authorList>
            <person name="Fuse N."/>
            <person name="Hirose S."/>
            <person name="Hayashi S."/>
        </authorList>
    </citation>
    <scope>FUNCTION</scope>
    <scope>DNA-BINDING SPECIFICITY</scope>
    <scope>MUTAGENESIS OF GLY-387</scope>
</reference>
<reference key="8">
    <citation type="journal article" date="1996" name="Development">
        <title>Determination of wing cell fate by the escargot and snail genes in Drosophila.</title>
        <authorList>
            <person name="Fuse N."/>
            <person name="Hirose S."/>
            <person name="Hayashi S."/>
        </authorList>
    </citation>
    <scope>FUNCTION</scope>
    <scope>DNA-BINDING SPECIFICITY</scope>
    <scope>TISSUE SPECIFICITY</scope>
</reference>
<reference key="9">
    <citation type="journal article" date="1996" name="Development">
        <title>Cadherin-mediated cell adhesion and cell motility in Drosophila trachea regulated by the transcription factor Escargot.</title>
        <authorList>
            <person name="Tanaka-Matakatsu M."/>
            <person name="Uemura T."/>
            <person name="Oda H."/>
            <person name="Takeichi M."/>
            <person name="Hayashi S."/>
        </authorList>
    </citation>
    <scope>FUNCTION</scope>
</reference>
<reference key="10">
    <citation type="journal article" date="1999" name="EMBO J.">
        <title>The mesoderm determinant snail collaborates with related zinc-finger proteins to control Drosophila neurogenesis.</title>
        <authorList>
            <person name="Ashraf S.I."/>
            <person name="Hu X."/>
            <person name="Roote J."/>
            <person name="Ip Y.T."/>
        </authorList>
    </citation>
    <scope>FUNCTION</scope>
</reference>
<reference key="11">
    <citation type="journal article" date="2002" name="Int. J. Dev. Biol.">
        <title>mgm 1, the earliest sex-specific germline marker in Drosophila, reflects expression of the gene esg in male stem cells.</title>
        <authorList>
            <person name="Streit A."/>
            <person name="Bernasconi L."/>
            <person name="Sergeev P."/>
            <person name="Cruz A."/>
            <person name="Steinmann-Zwicky M."/>
        </authorList>
    </citation>
    <scope>FUNCTION</scope>
    <scope>TISSUE SPECIFICITY</scope>
</reference>
<dbReference type="EMBL" id="M83207">
    <property type="protein sequence ID" value="AAA28513.1"/>
    <property type="molecule type" value="Genomic_DNA"/>
</dbReference>
<dbReference type="EMBL" id="AE014134">
    <property type="protein sequence ID" value="AAF53458.1"/>
    <property type="molecule type" value="Genomic_DNA"/>
</dbReference>
<dbReference type="EMBL" id="AY071590">
    <property type="protein sequence ID" value="AAL49212.1"/>
    <property type="molecule type" value="mRNA"/>
</dbReference>
<dbReference type="PIR" id="S33639">
    <property type="entry name" value="S33639"/>
</dbReference>
<dbReference type="RefSeq" id="NP_476600.1">
    <property type="nucleotide sequence ID" value="NM_057252.4"/>
</dbReference>
<dbReference type="SMR" id="P25932"/>
<dbReference type="BioGRID" id="60919">
    <property type="interactions" value="69"/>
</dbReference>
<dbReference type="FunCoup" id="P25932">
    <property type="interactions" value="1"/>
</dbReference>
<dbReference type="IntAct" id="P25932">
    <property type="interactions" value="23"/>
</dbReference>
<dbReference type="STRING" id="7227.FBpp0080293"/>
<dbReference type="GlyGen" id="P25932">
    <property type="glycosylation" value="1 site"/>
</dbReference>
<dbReference type="PaxDb" id="7227-FBpp0080293"/>
<dbReference type="EnsemblMetazoa" id="FBtr0080734">
    <property type="protein sequence ID" value="FBpp0080293"/>
    <property type="gene ID" value="FBgn0287768"/>
</dbReference>
<dbReference type="GeneID" id="34903"/>
<dbReference type="KEGG" id="dme:Dmel_CG3758"/>
<dbReference type="AGR" id="FB:FBgn0287768"/>
<dbReference type="CTD" id="34903"/>
<dbReference type="FlyBase" id="FBgn0287768">
    <property type="gene designation" value="esg"/>
</dbReference>
<dbReference type="VEuPathDB" id="VectorBase:FBgn0287768"/>
<dbReference type="eggNOG" id="KOG2462">
    <property type="taxonomic scope" value="Eukaryota"/>
</dbReference>
<dbReference type="GeneTree" id="ENSGT00940000166773"/>
<dbReference type="HOGENOM" id="CLU_030677_0_0_1"/>
<dbReference type="InParanoid" id="P25932"/>
<dbReference type="OMA" id="INVSDCC"/>
<dbReference type="OrthoDB" id="5428132at2759"/>
<dbReference type="PhylomeDB" id="P25932"/>
<dbReference type="SignaLink" id="P25932"/>
<dbReference type="BioGRID-ORCS" id="34903">
    <property type="hits" value="0 hits in 3 CRISPR screens"/>
</dbReference>
<dbReference type="GenomeRNAi" id="34903"/>
<dbReference type="PRO" id="PR:P25932"/>
<dbReference type="Proteomes" id="UP000000803">
    <property type="component" value="Chromosome 2L"/>
</dbReference>
<dbReference type="Bgee" id="FBgn0001981">
    <property type="expression patterns" value="Expressed in adult enteroendocrine precursor cell in adult midgut (Drosophila) and 19 other cell types or tissues"/>
</dbReference>
<dbReference type="ExpressionAtlas" id="P25932">
    <property type="expression patterns" value="baseline and differential"/>
</dbReference>
<dbReference type="GO" id="GO:0005634">
    <property type="term" value="C:nucleus"/>
    <property type="evidence" value="ECO:0000314"/>
    <property type="project" value="FlyBase"/>
</dbReference>
<dbReference type="GO" id="GO:0003677">
    <property type="term" value="F:DNA binding"/>
    <property type="evidence" value="ECO:0000314"/>
    <property type="project" value="UniProtKB"/>
</dbReference>
<dbReference type="GO" id="GO:0000981">
    <property type="term" value="F:DNA-binding transcription factor activity, RNA polymerase II-specific"/>
    <property type="evidence" value="ECO:0000318"/>
    <property type="project" value="GO_Central"/>
</dbReference>
<dbReference type="GO" id="GO:0001227">
    <property type="term" value="F:DNA-binding transcription repressor activity, RNA polymerase II-specific"/>
    <property type="evidence" value="ECO:0000314"/>
    <property type="project" value="FlyBase"/>
</dbReference>
<dbReference type="GO" id="GO:0000978">
    <property type="term" value="F:RNA polymerase II cis-regulatory region sequence-specific DNA binding"/>
    <property type="evidence" value="ECO:0000318"/>
    <property type="project" value="GO_Central"/>
</dbReference>
<dbReference type="GO" id="GO:0000977">
    <property type="term" value="F:RNA polymerase II transcription regulatory region sequence-specific DNA binding"/>
    <property type="evidence" value="ECO:0000314"/>
    <property type="project" value="FlyBase"/>
</dbReference>
<dbReference type="GO" id="GO:0008270">
    <property type="term" value="F:zinc ion binding"/>
    <property type="evidence" value="ECO:0007669"/>
    <property type="project" value="UniProtKB-KW"/>
</dbReference>
<dbReference type="GO" id="GO:0055059">
    <property type="term" value="P:asymmetric neuroblast division"/>
    <property type="evidence" value="ECO:0000316"/>
    <property type="project" value="FlyBase"/>
</dbReference>
<dbReference type="GO" id="GO:0035147">
    <property type="term" value="P:branch fusion, open tracheal system"/>
    <property type="evidence" value="ECO:0000315"/>
    <property type="project" value="UniProtKB"/>
</dbReference>
<dbReference type="GO" id="GO:0001709">
    <property type="term" value="P:cell fate determination"/>
    <property type="evidence" value="ECO:0000315"/>
    <property type="project" value="UniProtKB"/>
</dbReference>
<dbReference type="GO" id="GO:0001708">
    <property type="term" value="P:cell fate specification"/>
    <property type="evidence" value="ECO:0000315"/>
    <property type="project" value="FlyBase"/>
</dbReference>
<dbReference type="GO" id="GO:0007417">
    <property type="term" value="P:central nervous system development"/>
    <property type="evidence" value="ECO:0000315"/>
    <property type="project" value="UniProtKB"/>
</dbReference>
<dbReference type="GO" id="GO:0007427">
    <property type="term" value="P:epithelial cell migration, open tracheal system"/>
    <property type="evidence" value="ECO:0000315"/>
    <property type="project" value="UniProtKB"/>
</dbReference>
<dbReference type="GO" id="GO:0001837">
    <property type="term" value="P:epithelial to mesenchymal transition"/>
    <property type="evidence" value="ECO:0000315"/>
    <property type="project" value="FlyBase"/>
</dbReference>
<dbReference type="GO" id="GO:0035215">
    <property type="term" value="P:genital disc development"/>
    <property type="evidence" value="ECO:0000315"/>
    <property type="project" value="UniProtKB"/>
</dbReference>
<dbReference type="GO" id="GO:0030718">
    <property type="term" value="P:germ-line stem cell population maintenance"/>
    <property type="evidence" value="ECO:0000315"/>
    <property type="project" value="UniProtKB"/>
</dbReference>
<dbReference type="GO" id="GO:0042332">
    <property type="term" value="P:gravitaxis"/>
    <property type="evidence" value="ECO:0000315"/>
    <property type="project" value="FlyBase"/>
</dbReference>
<dbReference type="GO" id="GO:0036335">
    <property type="term" value="P:intestinal stem cell homeostasis"/>
    <property type="evidence" value="ECO:0000315"/>
    <property type="project" value="FlyBase"/>
</dbReference>
<dbReference type="GO" id="GO:0007489">
    <property type="term" value="P:maintenance of imaginal histoblast diploidy"/>
    <property type="evidence" value="ECO:0000315"/>
    <property type="project" value="UniProtKB"/>
</dbReference>
<dbReference type="GO" id="GO:0032876">
    <property type="term" value="P:negative regulation of DNA endoreduplication"/>
    <property type="evidence" value="ECO:0000315"/>
    <property type="project" value="FlyBase"/>
</dbReference>
<dbReference type="GO" id="GO:0045892">
    <property type="term" value="P:negative regulation of DNA-templated transcription"/>
    <property type="evidence" value="ECO:0000314"/>
    <property type="project" value="UniProtKB"/>
</dbReference>
<dbReference type="GO" id="GO:0000122">
    <property type="term" value="P:negative regulation of transcription by RNA polymerase II"/>
    <property type="evidence" value="ECO:0000314"/>
    <property type="project" value="UniProtKB"/>
</dbReference>
<dbReference type="GO" id="GO:0007424">
    <property type="term" value="P:open tracheal system development"/>
    <property type="evidence" value="ECO:0000315"/>
    <property type="project" value="FlyBase"/>
</dbReference>
<dbReference type="GO" id="GO:0045893">
    <property type="term" value="P:positive regulation of DNA-templated transcription"/>
    <property type="evidence" value="ECO:0000315"/>
    <property type="project" value="UniProtKB"/>
</dbReference>
<dbReference type="GO" id="GO:0002052">
    <property type="term" value="P:positive regulation of neuroblast proliferation"/>
    <property type="evidence" value="ECO:0000315"/>
    <property type="project" value="FlyBase"/>
</dbReference>
<dbReference type="GO" id="GO:0045944">
    <property type="term" value="P:positive regulation of transcription by RNA polymerase II"/>
    <property type="evidence" value="ECO:0000315"/>
    <property type="project" value="UniProtKB"/>
</dbReference>
<dbReference type="GO" id="GO:0048076">
    <property type="term" value="P:regulation of compound eye pigmentation"/>
    <property type="evidence" value="ECO:0000315"/>
    <property type="project" value="FlyBase"/>
</dbReference>
<dbReference type="GO" id="GO:0006355">
    <property type="term" value="P:regulation of DNA-templated transcription"/>
    <property type="evidence" value="ECO:0000318"/>
    <property type="project" value="GO_Central"/>
</dbReference>
<dbReference type="GO" id="GO:2000177">
    <property type="term" value="P:regulation of neural precursor cell proliferation"/>
    <property type="evidence" value="ECO:0000315"/>
    <property type="project" value="FlyBase"/>
</dbReference>
<dbReference type="GO" id="GO:0035094">
    <property type="term" value="P:response to nicotine"/>
    <property type="evidence" value="ECO:0000315"/>
    <property type="project" value="FlyBase"/>
</dbReference>
<dbReference type="GO" id="GO:0035019">
    <property type="term" value="P:somatic stem cell population maintenance"/>
    <property type="evidence" value="ECO:0000315"/>
    <property type="project" value="FlyBase"/>
</dbReference>
<dbReference type="GO" id="GO:0035220">
    <property type="term" value="P:wing disc development"/>
    <property type="evidence" value="ECO:0000315"/>
    <property type="project" value="UniProtKB"/>
</dbReference>
<dbReference type="FunFam" id="3.30.160.60:FF:000085">
    <property type="entry name" value="Snail zinc finger protein"/>
    <property type="match status" value="1"/>
</dbReference>
<dbReference type="FunFam" id="3.30.160.60:FF:000942">
    <property type="entry name" value="Snail zinc finger protein"/>
    <property type="match status" value="1"/>
</dbReference>
<dbReference type="FunFam" id="3.30.160.60:FF:001114">
    <property type="entry name" value="Zinc finger protein SNAI2"/>
    <property type="match status" value="1"/>
</dbReference>
<dbReference type="FunFam" id="3.30.160.60:FF:000207">
    <property type="entry name" value="zinc finger protein SNAI2"/>
    <property type="match status" value="1"/>
</dbReference>
<dbReference type="Gene3D" id="3.30.160.60">
    <property type="entry name" value="Classic Zinc Finger"/>
    <property type="match status" value="4"/>
</dbReference>
<dbReference type="InterPro" id="IPR050527">
    <property type="entry name" value="Snail/Krueppel_Znf"/>
</dbReference>
<dbReference type="InterPro" id="IPR036236">
    <property type="entry name" value="Znf_C2H2_sf"/>
</dbReference>
<dbReference type="InterPro" id="IPR013087">
    <property type="entry name" value="Znf_C2H2_type"/>
</dbReference>
<dbReference type="PANTHER" id="PTHR24388:SF54">
    <property type="entry name" value="PROTEIN ESCARGOT"/>
    <property type="match status" value="1"/>
</dbReference>
<dbReference type="PANTHER" id="PTHR24388">
    <property type="entry name" value="ZINC FINGER PROTEIN"/>
    <property type="match status" value="1"/>
</dbReference>
<dbReference type="Pfam" id="PF00096">
    <property type="entry name" value="zf-C2H2"/>
    <property type="match status" value="5"/>
</dbReference>
<dbReference type="SMART" id="SM00355">
    <property type="entry name" value="ZnF_C2H2"/>
    <property type="match status" value="5"/>
</dbReference>
<dbReference type="SUPFAM" id="SSF57667">
    <property type="entry name" value="beta-beta-alpha zinc fingers"/>
    <property type="match status" value="4"/>
</dbReference>
<dbReference type="PROSITE" id="PS00028">
    <property type="entry name" value="ZINC_FINGER_C2H2_1"/>
    <property type="match status" value="4"/>
</dbReference>
<dbReference type="PROSITE" id="PS50157">
    <property type="entry name" value="ZINC_FINGER_C2H2_2"/>
    <property type="match status" value="5"/>
</dbReference>
<feature type="chain" id="PRO_0000047027" description="Protein escargot">
    <location>
        <begin position="1"/>
        <end position="470"/>
    </location>
</feature>
<feature type="zinc finger region" description="C2H2-type 1" evidence="1">
    <location>
        <begin position="309"/>
        <end position="331"/>
    </location>
</feature>
<feature type="zinc finger region" description="C2H2-type 2" evidence="1">
    <location>
        <begin position="344"/>
        <end position="366"/>
    </location>
</feature>
<feature type="zinc finger region" description="C2H2-type 3" evidence="1">
    <location>
        <begin position="370"/>
        <end position="392"/>
    </location>
</feature>
<feature type="zinc finger region" description="C2H2-type 4" evidence="1">
    <location>
        <begin position="398"/>
        <end position="420"/>
    </location>
</feature>
<feature type="zinc finger region" description="C2H2-type 5; atypical" evidence="1">
    <location>
        <begin position="426"/>
        <end position="449"/>
    </location>
</feature>
<feature type="region of interest" description="Disordered" evidence="2">
    <location>
        <begin position="271"/>
        <end position="309"/>
    </location>
</feature>
<feature type="region of interest" description="Disordered" evidence="2">
    <location>
        <begin position="448"/>
        <end position="470"/>
    </location>
</feature>
<feature type="mutagenesis site" description="In esg[VS8]; 50-fold reduction of affinity for DNA binding." evidence="6">
    <original>G</original>
    <variation>E</variation>
    <location>
        <position position="387"/>
    </location>
</feature>
<feature type="sequence conflict" description="In Ref. 1; AAA28513." evidence="10" ref="1">
    <original>Q</original>
    <variation>P</variation>
    <location>
        <position position="149"/>
    </location>
</feature>
<feature type="sequence conflict" description="In Ref. 1; AAA28513." evidence="10" ref="1">
    <original>I</original>
    <variation>M</variation>
    <location>
        <position position="196"/>
    </location>
</feature>
<feature type="sequence conflict" description="In Ref. 5; AAL49212." evidence="10" ref="5">
    <original>S</original>
    <variation>G</variation>
    <location>
        <position position="459"/>
    </location>
</feature>
<accession>P25932</accession>
<accession>Q8SYF2</accession>
<accession>Q9V3E1</accession>
<proteinExistence type="evidence at protein level"/>
<organism>
    <name type="scientific">Drosophila melanogaster</name>
    <name type="common">Fruit fly</name>
    <dbReference type="NCBI Taxonomy" id="7227"/>
    <lineage>
        <taxon>Eukaryota</taxon>
        <taxon>Metazoa</taxon>
        <taxon>Ecdysozoa</taxon>
        <taxon>Arthropoda</taxon>
        <taxon>Hexapoda</taxon>
        <taxon>Insecta</taxon>
        <taxon>Pterygota</taxon>
        <taxon>Neoptera</taxon>
        <taxon>Endopterygota</taxon>
        <taxon>Diptera</taxon>
        <taxon>Brachycera</taxon>
        <taxon>Muscomorpha</taxon>
        <taxon>Ephydroidea</taxon>
        <taxon>Drosophilidae</taxon>
        <taxon>Drosophila</taxon>
        <taxon>Sophophora</taxon>
    </lineage>
</organism>
<keyword id="KW-0010">Activator</keyword>
<keyword id="KW-0217">Developmental protein</keyword>
<keyword id="KW-0221">Differentiation</keyword>
<keyword id="KW-0238">DNA-binding</keyword>
<keyword id="KW-0479">Metal-binding</keyword>
<keyword id="KW-0524">Neurogenesis</keyword>
<keyword id="KW-0539">Nucleus</keyword>
<keyword id="KW-1185">Reference proteome</keyword>
<keyword id="KW-0677">Repeat</keyword>
<keyword id="KW-0678">Repressor</keyword>
<keyword id="KW-0804">Transcription</keyword>
<keyword id="KW-0805">Transcription regulation</keyword>
<keyword id="KW-0862">Zinc</keyword>
<keyword id="KW-0863">Zinc-finger</keyword>
<evidence type="ECO:0000255" key="1">
    <source>
        <dbReference type="PROSITE-ProRule" id="PRU00042"/>
    </source>
</evidence>
<evidence type="ECO:0000256" key="2">
    <source>
        <dbReference type="SAM" id="MobiDB-lite"/>
    </source>
</evidence>
<evidence type="ECO:0000269" key="3">
    <source>
    </source>
</evidence>
<evidence type="ECO:0000269" key="4">
    <source>
    </source>
</evidence>
<evidence type="ECO:0000269" key="5">
    <source>
    </source>
</evidence>
<evidence type="ECO:0000269" key="6">
    <source>
    </source>
</evidence>
<evidence type="ECO:0000269" key="7">
    <source>
    </source>
</evidence>
<evidence type="ECO:0000269" key="8">
    <source>
    </source>
</evidence>
<evidence type="ECO:0000269" key="9">
    <source>
    </source>
</evidence>
<evidence type="ECO:0000305" key="10"/>